<keyword id="KW-1185">Reference proteome</keyword>
<dbReference type="EMBL" id="AY653733">
    <property type="protein sequence ID" value="AAV50691.1"/>
    <property type="molecule type" value="Genomic_DNA"/>
</dbReference>
<dbReference type="KEGG" id="vg:9925043"/>
<dbReference type="Proteomes" id="UP000001134">
    <property type="component" value="Genome"/>
</dbReference>
<accession>Q5UQM0</accession>
<protein>
    <recommendedName>
        <fullName>Uncharacterized protein R422</fullName>
    </recommendedName>
</protein>
<organismHost>
    <name type="scientific">Acanthamoeba polyphaga</name>
    <name type="common">Amoeba</name>
    <dbReference type="NCBI Taxonomy" id="5757"/>
</organismHost>
<name>YR422_MIMIV</name>
<organism>
    <name type="scientific">Acanthamoeba polyphaga mimivirus</name>
    <name type="common">APMV</name>
    <dbReference type="NCBI Taxonomy" id="212035"/>
    <lineage>
        <taxon>Viruses</taxon>
        <taxon>Varidnaviria</taxon>
        <taxon>Bamfordvirae</taxon>
        <taxon>Nucleocytoviricota</taxon>
        <taxon>Megaviricetes</taxon>
        <taxon>Imitervirales</taxon>
        <taxon>Mimiviridae</taxon>
        <taxon>Megamimivirinae</taxon>
        <taxon>Mimivirus</taxon>
        <taxon>Mimivirus bradfordmassiliense</taxon>
    </lineage>
</organism>
<reference key="1">
    <citation type="journal article" date="2004" name="Science">
        <title>The 1.2-megabase genome sequence of Mimivirus.</title>
        <authorList>
            <person name="Raoult D."/>
            <person name="Audic S."/>
            <person name="Robert C."/>
            <person name="Abergel C."/>
            <person name="Renesto P."/>
            <person name="Ogata H."/>
            <person name="La Scola B."/>
            <person name="Susan M."/>
            <person name="Claverie J.-M."/>
        </authorList>
    </citation>
    <scope>NUCLEOTIDE SEQUENCE [LARGE SCALE GENOMIC DNA]</scope>
    <source>
        <strain>Rowbotham-Bradford</strain>
    </source>
</reference>
<feature type="chain" id="PRO_0000244043" description="Uncharacterized protein R422">
    <location>
        <begin position="1"/>
        <end position="232"/>
    </location>
</feature>
<proteinExistence type="predicted"/>
<sequence length="232" mass="28239">MELPNRYSDLFVTEKARDFWCFTRNSMLYYMLLRSRNLNNILDEYIQCMNQFCGFYSMRIPKNKYNDQILTYSYPHLRSFEEICLDNVDKNYISTGDFKEMRIFYEQLLKFVDKCIGRKYKYGHKFNLIENNKIHQIAKEKTSKLLDKCPYNNVYVKIPKNVFNTEQYKEKNIVNTRYINDKNNIILMFNNNHNKFTFLTLWNITECIDSFSYFRIVKCIDQDDTVSIEYID</sequence>
<gene>
    <name type="ordered locus">MIMI_R422</name>
</gene>